<dbReference type="EMBL" id="CH379067">
    <property type="protein sequence ID" value="EAL31298.2"/>
    <property type="molecule type" value="Genomic_DNA"/>
</dbReference>
<dbReference type="SMR" id="Q29FF7"/>
<dbReference type="FunCoup" id="Q29FF7">
    <property type="interactions" value="2284"/>
</dbReference>
<dbReference type="STRING" id="46245.Q29FF7"/>
<dbReference type="eggNOG" id="KOG1875">
    <property type="taxonomic scope" value="Eukaryota"/>
</dbReference>
<dbReference type="HOGENOM" id="CLU_001928_0_0_1"/>
<dbReference type="InParanoid" id="Q29FF7"/>
<dbReference type="OMA" id="KQPAYFI"/>
<dbReference type="Proteomes" id="UP000001819">
    <property type="component" value="Unplaced"/>
</dbReference>
<dbReference type="GO" id="GO:0070847">
    <property type="term" value="C:core mediator complex"/>
    <property type="evidence" value="ECO:0007669"/>
    <property type="project" value="TreeGrafter"/>
</dbReference>
<dbReference type="GO" id="GO:0016592">
    <property type="term" value="C:mediator complex"/>
    <property type="evidence" value="ECO:0000250"/>
    <property type="project" value="UniProtKB"/>
</dbReference>
<dbReference type="GO" id="GO:0003712">
    <property type="term" value="F:transcription coregulator activity"/>
    <property type="evidence" value="ECO:0000250"/>
    <property type="project" value="UniProtKB"/>
</dbReference>
<dbReference type="GO" id="GO:0006357">
    <property type="term" value="P:regulation of transcription by RNA polymerase II"/>
    <property type="evidence" value="ECO:0000250"/>
    <property type="project" value="UniProtKB"/>
</dbReference>
<dbReference type="InterPro" id="IPR056877">
    <property type="entry name" value="Med14_C"/>
</dbReference>
<dbReference type="InterPro" id="IPR055122">
    <property type="entry name" value="Med14_N"/>
</dbReference>
<dbReference type="InterPro" id="IPR055113">
    <property type="entry name" value="Med14_RM2"/>
</dbReference>
<dbReference type="InterPro" id="IPR055114">
    <property type="entry name" value="Med14_RM6"/>
</dbReference>
<dbReference type="InterPro" id="IPR055107">
    <property type="entry name" value="Med14_RM8"/>
</dbReference>
<dbReference type="InterPro" id="IPR013947">
    <property type="entry name" value="Mediator_Med14"/>
</dbReference>
<dbReference type="InterPro" id="IPR056879">
    <property type="entry name" value="RM3_Med14"/>
</dbReference>
<dbReference type="InterPro" id="IPR056878">
    <property type="entry name" value="RM5_Med14"/>
</dbReference>
<dbReference type="PANTHER" id="PTHR12809">
    <property type="entry name" value="MEDIATOR COMPLEX SUBUNIT"/>
    <property type="match status" value="1"/>
</dbReference>
<dbReference type="PANTHER" id="PTHR12809:SF2">
    <property type="entry name" value="MEDIATOR OF RNA POLYMERASE II TRANSCRIPTION SUBUNIT 14"/>
    <property type="match status" value="1"/>
</dbReference>
<dbReference type="Pfam" id="PF08638">
    <property type="entry name" value="Med14"/>
    <property type="match status" value="1"/>
</dbReference>
<dbReference type="Pfam" id="PF25069">
    <property type="entry name" value="Med14_C"/>
    <property type="match status" value="1"/>
</dbReference>
<dbReference type="Pfam" id="PF22981">
    <property type="entry name" value="RM2_Med14"/>
    <property type="match status" value="1"/>
</dbReference>
<dbReference type="Pfam" id="PF25065">
    <property type="entry name" value="RM3_Med14"/>
    <property type="match status" value="1"/>
</dbReference>
<dbReference type="Pfam" id="PF25067">
    <property type="entry name" value="RM5_Med14"/>
    <property type="match status" value="1"/>
</dbReference>
<dbReference type="Pfam" id="PF22984">
    <property type="entry name" value="RM6_Med14"/>
    <property type="match status" value="1"/>
</dbReference>
<dbReference type="Pfam" id="PF22983">
    <property type="entry name" value="RM8_Med14"/>
    <property type="match status" value="1"/>
</dbReference>
<gene>
    <name type="primary">MED14</name>
    <name type="ORF">GA11352</name>
</gene>
<accession>Q29FF7</accession>
<sequence>MAPTPLPLEQMSGVGGYLPAGQEGGPRINTMSMSMLIDFIIQRTYHELTVLAELLPRKTDMERKIEIYNYAARTRHLFTRLNALVKWGNSVSKVDKSSQIMSFLDKQNMLFVETADMLARMSRETLVRARLPNFHIPAAVEVLTTGTYNRLPTCIRERIVPADAITPAEKKQTLLRLNQVIQHRLVTGKLLPQMREFRIKNGRVTFEVKHEFSVALTVMGDSQNVPWRLLDIDVLVEDKETGDGKSLVHPLQVNYIHQLIQARLVENPNALSEVYNCLHYFCQSLQLEVLYTQTLRLNYERLDDNNITVEEYVPGVKLTVSYWRDLKSELGYRLTVQSDPSEIGRPLAVVHVPSLGAKESAEVADRAVRSEHLSMERLIVHTVYIRSVSRLSDLKLEFQAFLKDVDFNLQGTPAILTVPVLSPCLRAEQIHITIDTHTGMFRCHVPKHLDCPITDEMQEALNGDRSKLPSLLSELRYWITHRRCEKTLQHLPATATDTLTFLTQPEQELLQQGRHKIYVKLHRHPNIILVVQLKEKSTMANEMEYTFHLGFVAFQKDEADVIDDSAKQLVSVVAQPPSDIPKFFTKLMRLIEFDTFVATHGPGTEVDAEVSPHKRKSTGDILAPPAKQQKTIFPAYFIPELAHVVAMCDEKIPFMNLAQTLSKHNIPHSGLQVEANATSLVLKILALPQPGKSATAAGQQPQQGAASAAGTAPPSGSSAFPRIEPHVWDDLMRRVLSISVRSQTNKNSQVRIWVVEFVFYSTPLQSCHPKEQGSRRTVYLTYEQANHDFSKTVEELLNDWSKIVYLYTLVYDFAEQLRNKRLALCDMLVVKSYSYMNLLLGYGPKKEVSCNIYWSVQSHGFRLTFVGGMSAVNAHSMMRDQLAQHLNQQHSLTQIAQILHETYNPMSSIAKLPVLPFLGIPRPQVPVLSFCMLAQSPCLMRLTYQAVYCLELRFRANRLVSIRDGASSRFERNVIEEFTPIQGLKAFLSKYVDESAAYRGRAPHEDDNPLSPIGMEDNYGGPSSVTGVSAGGSSPFLGAGMRGPQSPRDSGLRFPAPHTPPSSSNPHTPASPHPSAGGGGAAQSHGNFNLTSPPAPHMPHPSPGGLMPSSPLNPQPSPHMVHSPGPNTLYMQSHQDSPFTAMSPANNQWPGSPSMPRPSPRPGQSPEHKSTGGSVVTGGPDRGGSRGTLNRPWAGAVPTLLTHEALETLCRPSPHPNKDINVTDMSPLERFLGCVYMRRQLHRNIQNEESLTALNSTEPGVVLFKVDGLQCQVMLNQMHMQTLHLKITQLPPPPDKPTFQLSPDDLLVIEQYFDTRVAAPPYRPNSLHSICRLLNLPAQVLKDFVQIMRLELKPEFGGDQLKWTVQMCMRMPPSAVPIVPSGNACVVLGRMKILFFLQITKIPFNGKDWKDSPSLVLPIVYDITMNLTQMAERREQVPSPMMTAASTLLRRFSEFNSQQNQCSLFPAITDLLTNLQLATDMPQPPPNQAIGPPVGVGVGVGVGIGVVGSSPNPMMPMQQLQPQVGPQGQVGPGGYPQLGPNPGGPQ</sequence>
<protein>
    <recommendedName>
        <fullName>Mediator of RNA polymerase II transcription subunit 14</fullName>
    </recommendedName>
    <alternativeName>
        <fullName>Mediator complex subunit 14</fullName>
    </alternativeName>
</protein>
<comment type="function">
    <text evidence="1">Component of the Mediator complex, a coactivator involved in the regulated transcription of nearly all RNA polymerase II-dependent genes. Mediator functions as a bridge to convey information from gene-specific regulatory proteins to the basal RNA polymerase II transcription machinery. Mediator is recruited to promoters by direct interactions with regulatory proteins and serves as a scaffold for the assembly of a functional preinitiation complex with RNA polymerase II and the general transcription factors (By similarity).</text>
</comment>
<comment type="subunit">
    <text evidence="1">Component of the Mediator complex.</text>
</comment>
<comment type="subcellular location">
    <subcellularLocation>
        <location evidence="3">Nucleus</location>
    </subcellularLocation>
</comment>
<comment type="similarity">
    <text evidence="3">Belongs to the Mediator complex subunit 14 family.</text>
</comment>
<organism>
    <name type="scientific">Drosophila pseudoobscura pseudoobscura</name>
    <name type="common">Fruit fly</name>
    <dbReference type="NCBI Taxonomy" id="46245"/>
    <lineage>
        <taxon>Eukaryota</taxon>
        <taxon>Metazoa</taxon>
        <taxon>Ecdysozoa</taxon>
        <taxon>Arthropoda</taxon>
        <taxon>Hexapoda</taxon>
        <taxon>Insecta</taxon>
        <taxon>Pterygota</taxon>
        <taxon>Neoptera</taxon>
        <taxon>Endopterygota</taxon>
        <taxon>Diptera</taxon>
        <taxon>Brachycera</taxon>
        <taxon>Muscomorpha</taxon>
        <taxon>Ephydroidea</taxon>
        <taxon>Drosophilidae</taxon>
        <taxon>Drosophila</taxon>
        <taxon>Sophophora</taxon>
    </lineage>
</organism>
<feature type="chain" id="PRO_0000304589" description="Mediator of RNA polymerase II transcription subunit 14">
    <location>
        <begin position="1"/>
        <end position="1546"/>
    </location>
</feature>
<feature type="region of interest" description="Disordered" evidence="2">
    <location>
        <begin position="692"/>
        <end position="717"/>
    </location>
</feature>
<feature type="region of interest" description="Disordered" evidence="2">
    <location>
        <begin position="1000"/>
        <end position="1193"/>
    </location>
</feature>
<feature type="region of interest" description="Disordered" evidence="2">
    <location>
        <begin position="1512"/>
        <end position="1546"/>
    </location>
</feature>
<feature type="short sequence motif" description="LXXLL motif 1">
    <location>
        <begin position="51"/>
        <end position="55"/>
    </location>
</feature>
<feature type="short sequence motif" description="LXXLL motif 2">
    <location>
        <begin position="468"/>
        <end position="472"/>
    </location>
</feature>
<feature type="compositionally biased region" description="Low complexity" evidence="2">
    <location>
        <begin position="693"/>
        <end position="717"/>
    </location>
</feature>
<feature type="compositionally biased region" description="Low complexity" evidence="2">
    <location>
        <begin position="1020"/>
        <end position="1035"/>
    </location>
</feature>
<feature type="compositionally biased region" description="Low complexity" evidence="2">
    <location>
        <begin position="1061"/>
        <end position="1075"/>
    </location>
</feature>
<feature type="compositionally biased region" description="Pro residues" evidence="2">
    <location>
        <begin position="1093"/>
        <end position="1102"/>
    </location>
</feature>
<feature type="compositionally biased region" description="Polar residues" evidence="2">
    <location>
        <begin position="1125"/>
        <end position="1149"/>
    </location>
</feature>
<feature type="compositionally biased region" description="Pro residues" evidence="2">
    <location>
        <begin position="1153"/>
        <end position="1163"/>
    </location>
</feature>
<feature type="compositionally biased region" description="Low complexity" evidence="2">
    <location>
        <begin position="1515"/>
        <end position="1527"/>
    </location>
</feature>
<proteinExistence type="inferred from homology"/>
<keyword id="KW-0010">Activator</keyword>
<keyword id="KW-0539">Nucleus</keyword>
<keyword id="KW-1185">Reference proteome</keyword>
<keyword id="KW-0677">Repeat</keyword>
<keyword id="KW-0804">Transcription</keyword>
<keyword id="KW-0805">Transcription regulation</keyword>
<name>MED14_DROPS</name>
<reference key="1">
    <citation type="journal article" date="2005" name="Genome Res.">
        <title>Comparative genome sequencing of Drosophila pseudoobscura: chromosomal, gene, and cis-element evolution.</title>
        <authorList>
            <person name="Richards S."/>
            <person name="Liu Y."/>
            <person name="Bettencourt B.R."/>
            <person name="Hradecky P."/>
            <person name="Letovsky S."/>
            <person name="Nielsen R."/>
            <person name="Thornton K."/>
            <person name="Hubisz M.J."/>
            <person name="Chen R."/>
            <person name="Meisel R.P."/>
            <person name="Couronne O."/>
            <person name="Hua S."/>
            <person name="Smith M.A."/>
            <person name="Zhang P."/>
            <person name="Liu J."/>
            <person name="Bussemaker H.J."/>
            <person name="van Batenburg M.F."/>
            <person name="Howells S.L."/>
            <person name="Scherer S.E."/>
            <person name="Sodergren E."/>
            <person name="Matthews B.B."/>
            <person name="Crosby M.A."/>
            <person name="Schroeder A.J."/>
            <person name="Ortiz-Barrientos D."/>
            <person name="Rives C.M."/>
            <person name="Metzker M.L."/>
            <person name="Muzny D.M."/>
            <person name="Scott G."/>
            <person name="Steffen D."/>
            <person name="Wheeler D.A."/>
            <person name="Worley K.C."/>
            <person name="Havlak P."/>
            <person name="Durbin K.J."/>
            <person name="Egan A."/>
            <person name="Gill R."/>
            <person name="Hume J."/>
            <person name="Morgan M.B."/>
            <person name="Miner G."/>
            <person name="Hamilton C."/>
            <person name="Huang Y."/>
            <person name="Waldron L."/>
            <person name="Verduzco D."/>
            <person name="Clerc-Blankenburg K.P."/>
            <person name="Dubchak I."/>
            <person name="Noor M.A.F."/>
            <person name="Anderson W."/>
            <person name="White K.P."/>
            <person name="Clark A.G."/>
            <person name="Schaeffer S.W."/>
            <person name="Gelbart W.M."/>
            <person name="Weinstock G.M."/>
            <person name="Gibbs R.A."/>
        </authorList>
    </citation>
    <scope>NUCLEOTIDE SEQUENCE [LARGE SCALE GENOMIC DNA]</scope>
    <source>
        <strain>MV2-25 / Tucson 14011-0121.94</strain>
    </source>
</reference>
<evidence type="ECO:0000250" key="1"/>
<evidence type="ECO:0000256" key="2">
    <source>
        <dbReference type="SAM" id="MobiDB-lite"/>
    </source>
</evidence>
<evidence type="ECO:0000305" key="3"/>